<organism>
    <name type="scientific">Arabidopsis thaliana</name>
    <name type="common">Mouse-ear cress</name>
    <dbReference type="NCBI Taxonomy" id="3702"/>
    <lineage>
        <taxon>Eukaryota</taxon>
        <taxon>Viridiplantae</taxon>
        <taxon>Streptophyta</taxon>
        <taxon>Embryophyta</taxon>
        <taxon>Tracheophyta</taxon>
        <taxon>Spermatophyta</taxon>
        <taxon>Magnoliopsida</taxon>
        <taxon>eudicotyledons</taxon>
        <taxon>Gunneridae</taxon>
        <taxon>Pentapetalae</taxon>
        <taxon>rosids</taxon>
        <taxon>malvids</taxon>
        <taxon>Brassicales</taxon>
        <taxon>Brassicaceae</taxon>
        <taxon>Camelineae</taxon>
        <taxon>Arabidopsis</taxon>
    </lineage>
</organism>
<proteinExistence type="evidence at protein level"/>
<dbReference type="EC" id="2.4.2.7"/>
<dbReference type="EMBL" id="AL049730">
    <property type="protein sequence ID" value="CAB41714.1"/>
    <property type="molecule type" value="Genomic_DNA"/>
</dbReference>
<dbReference type="EMBL" id="AL161534">
    <property type="protein sequence ID" value="CAB78287.1"/>
    <property type="molecule type" value="Genomic_DNA"/>
</dbReference>
<dbReference type="EMBL" id="CP002687">
    <property type="protein sequence ID" value="AEE83133.1"/>
    <property type="molecule type" value="Genomic_DNA"/>
</dbReference>
<dbReference type="EMBL" id="CP002687">
    <property type="protein sequence ID" value="ANM68065.1"/>
    <property type="molecule type" value="Genomic_DNA"/>
</dbReference>
<dbReference type="EMBL" id="AY133689">
    <property type="protein sequence ID" value="AAM91623.1"/>
    <property type="molecule type" value="mRNA"/>
</dbReference>
<dbReference type="PIR" id="T07636">
    <property type="entry name" value="T07636"/>
</dbReference>
<dbReference type="RefSeq" id="NP_001319911.1">
    <molecule id="Q9SU38-1"/>
    <property type="nucleotide sequence ID" value="NM_001340773.1"/>
</dbReference>
<dbReference type="RefSeq" id="NP_192981.1">
    <molecule id="Q9SU38-1"/>
    <property type="nucleotide sequence ID" value="NM_117314.3"/>
</dbReference>
<dbReference type="SMR" id="Q9SU38"/>
<dbReference type="FunCoup" id="Q9SU38">
    <property type="interactions" value="1952"/>
</dbReference>
<dbReference type="STRING" id="3702.Q9SU38"/>
<dbReference type="iPTMnet" id="Q9SU38"/>
<dbReference type="PaxDb" id="3702-AT4G12440.2"/>
<dbReference type="ProteomicsDB" id="244464">
    <molecule id="Q9SU38-1"/>
</dbReference>
<dbReference type="EnsemblPlants" id="AT4G12440.2">
    <molecule id="Q9SU38-1"/>
    <property type="protein sequence ID" value="AT4G12440.2"/>
    <property type="gene ID" value="AT4G12440"/>
</dbReference>
<dbReference type="EnsemblPlants" id="AT4G12440.3">
    <molecule id="Q9SU38-1"/>
    <property type="protein sequence ID" value="AT4G12440.3"/>
    <property type="gene ID" value="AT4G12440"/>
</dbReference>
<dbReference type="GeneID" id="826856"/>
<dbReference type="Gramene" id="AT4G12440.2">
    <molecule id="Q9SU38-1"/>
    <property type="protein sequence ID" value="AT4G12440.2"/>
    <property type="gene ID" value="AT4G12440"/>
</dbReference>
<dbReference type="Gramene" id="AT4G12440.3">
    <molecule id="Q9SU38-1"/>
    <property type="protein sequence ID" value="AT4G12440.3"/>
    <property type="gene ID" value="AT4G12440"/>
</dbReference>
<dbReference type="KEGG" id="ath:AT4G12440"/>
<dbReference type="Araport" id="AT4G12440"/>
<dbReference type="TAIR" id="AT4G12440">
    <property type="gene designation" value="APT4"/>
</dbReference>
<dbReference type="eggNOG" id="KOG1712">
    <property type="taxonomic scope" value="Eukaryota"/>
</dbReference>
<dbReference type="HOGENOM" id="CLU_063339_0_3_1"/>
<dbReference type="InParanoid" id="Q9SU38"/>
<dbReference type="OMA" id="MSACTDE"/>
<dbReference type="OrthoDB" id="363185at2759"/>
<dbReference type="PhylomeDB" id="Q9SU38"/>
<dbReference type="BioCyc" id="ARA:AT4G12440-MONOMER"/>
<dbReference type="UniPathway" id="UPA00588">
    <property type="reaction ID" value="UER00646"/>
</dbReference>
<dbReference type="PRO" id="PR:Q9SU38"/>
<dbReference type="Proteomes" id="UP000006548">
    <property type="component" value="Chromosome 4"/>
</dbReference>
<dbReference type="ExpressionAtlas" id="Q9SU38">
    <property type="expression patterns" value="baseline and differential"/>
</dbReference>
<dbReference type="GO" id="GO:0005737">
    <property type="term" value="C:cytoplasm"/>
    <property type="evidence" value="ECO:0007669"/>
    <property type="project" value="UniProtKB-SubCell"/>
</dbReference>
<dbReference type="GO" id="GO:0003999">
    <property type="term" value="F:adenine phosphoribosyltransferase activity"/>
    <property type="evidence" value="ECO:0000314"/>
    <property type="project" value="UniProtKB"/>
</dbReference>
<dbReference type="GO" id="GO:0006168">
    <property type="term" value="P:adenine salvage"/>
    <property type="evidence" value="ECO:0007669"/>
    <property type="project" value="InterPro"/>
</dbReference>
<dbReference type="GO" id="GO:0044209">
    <property type="term" value="P:AMP salvage"/>
    <property type="evidence" value="ECO:0007669"/>
    <property type="project" value="UniProtKB-UniPathway"/>
</dbReference>
<dbReference type="GO" id="GO:0006166">
    <property type="term" value="P:purine ribonucleoside salvage"/>
    <property type="evidence" value="ECO:0007669"/>
    <property type="project" value="UniProtKB-KW"/>
</dbReference>
<dbReference type="CDD" id="cd06223">
    <property type="entry name" value="PRTases_typeI"/>
    <property type="match status" value="1"/>
</dbReference>
<dbReference type="FunFam" id="3.40.50.2020:FF:000022">
    <property type="entry name" value="Adenine phosphoribosyltransferase 1"/>
    <property type="match status" value="1"/>
</dbReference>
<dbReference type="Gene3D" id="3.40.50.2020">
    <property type="match status" value="1"/>
</dbReference>
<dbReference type="HAMAP" id="MF_00004">
    <property type="entry name" value="Aden_phosphoribosyltr"/>
    <property type="match status" value="1"/>
</dbReference>
<dbReference type="InterPro" id="IPR005764">
    <property type="entry name" value="Ade_phspho_trans"/>
</dbReference>
<dbReference type="InterPro" id="IPR050120">
    <property type="entry name" value="Adenine_PRTase"/>
</dbReference>
<dbReference type="InterPro" id="IPR000836">
    <property type="entry name" value="PRibTrfase_dom"/>
</dbReference>
<dbReference type="InterPro" id="IPR029057">
    <property type="entry name" value="PRTase-like"/>
</dbReference>
<dbReference type="NCBIfam" id="TIGR01090">
    <property type="entry name" value="apt"/>
    <property type="match status" value="1"/>
</dbReference>
<dbReference type="NCBIfam" id="NF002634">
    <property type="entry name" value="PRK02304.1-3"/>
    <property type="match status" value="1"/>
</dbReference>
<dbReference type="NCBIfam" id="NF002636">
    <property type="entry name" value="PRK02304.1-5"/>
    <property type="match status" value="1"/>
</dbReference>
<dbReference type="PANTHER" id="PTHR11776">
    <property type="entry name" value="ADENINE PHOSPHORIBOSYLTRANSFERASE"/>
    <property type="match status" value="1"/>
</dbReference>
<dbReference type="PANTHER" id="PTHR11776:SF7">
    <property type="entry name" value="PHOSPHORIBOSYLTRANSFERASE DOMAIN-CONTAINING PROTEIN"/>
    <property type="match status" value="1"/>
</dbReference>
<dbReference type="Pfam" id="PF00156">
    <property type="entry name" value="Pribosyltran"/>
    <property type="match status" value="1"/>
</dbReference>
<dbReference type="SUPFAM" id="SSF53271">
    <property type="entry name" value="PRTase-like"/>
    <property type="match status" value="1"/>
</dbReference>
<dbReference type="PROSITE" id="PS01316">
    <property type="entry name" value="ATP_P_PHORIBOSYLTR"/>
    <property type="match status" value="1"/>
</dbReference>
<dbReference type="PROSITE" id="PS00103">
    <property type="entry name" value="PUR_PYR_PR_TRANSFER"/>
    <property type="match status" value="1"/>
</dbReference>
<comment type="function">
    <text evidence="2">Catalyzes a salvage reaction resulting in the formation of AMP, that is energically less costly than de novo synthesis. May contribute to the recycling of adenine into adenylate nucleotides and the inactivation of cytokinins by phosphoribosylation. Possesses low activity toward adenine, but can efficiently convert cytokinins from free bases (active form) to the corresponding nucleotides (inactive form).</text>
</comment>
<comment type="catalytic activity">
    <reaction evidence="2">
        <text>AMP + diphosphate = 5-phospho-alpha-D-ribose 1-diphosphate + adenine</text>
        <dbReference type="Rhea" id="RHEA:16609"/>
        <dbReference type="ChEBI" id="CHEBI:16708"/>
        <dbReference type="ChEBI" id="CHEBI:33019"/>
        <dbReference type="ChEBI" id="CHEBI:58017"/>
        <dbReference type="ChEBI" id="CHEBI:456215"/>
        <dbReference type="EC" id="2.4.2.7"/>
    </reaction>
</comment>
<comment type="pathway">
    <text>Purine metabolism; AMP biosynthesis via salvage pathway; AMP from adenine: step 1/1.</text>
</comment>
<comment type="subunit">
    <text evidence="1">Homodimer.</text>
</comment>
<comment type="subcellular location">
    <subcellularLocation>
        <location evidence="3">Cytoplasm</location>
    </subcellularLocation>
</comment>
<comment type="alternative products">
    <event type="alternative splicing"/>
    <isoform>
        <id>Q9SU38-1</id>
        <name>1</name>
        <sequence type="displayed"/>
    </isoform>
    <text>A number of isoforms are produced. According to EST sequences.</text>
</comment>
<comment type="disruption phenotype">
    <text evidence="2">No visible phenotype under normal growth conditions.</text>
</comment>
<comment type="similarity">
    <text evidence="3">Belongs to the purine/pyrimidine phosphoribosyltransferase family.</text>
</comment>
<protein>
    <recommendedName>
        <fullName>Adenine phosphoribosyltransferase 4</fullName>
        <shortName>AtAPT4</shortName>
        <ecNumber>2.4.2.7</ecNumber>
    </recommendedName>
</protein>
<name>APT4_ARATH</name>
<reference key="1">
    <citation type="journal article" date="1999" name="Nature">
        <title>Sequence and analysis of chromosome 4 of the plant Arabidopsis thaliana.</title>
        <authorList>
            <person name="Mayer K.F.X."/>
            <person name="Schueller C."/>
            <person name="Wambutt R."/>
            <person name="Murphy G."/>
            <person name="Volckaert G."/>
            <person name="Pohl T."/>
            <person name="Duesterhoeft A."/>
            <person name="Stiekema W."/>
            <person name="Entian K.-D."/>
            <person name="Terryn N."/>
            <person name="Harris B."/>
            <person name="Ansorge W."/>
            <person name="Brandt P."/>
            <person name="Grivell L.A."/>
            <person name="Rieger M."/>
            <person name="Weichselgartner M."/>
            <person name="de Simone V."/>
            <person name="Obermaier B."/>
            <person name="Mache R."/>
            <person name="Mueller M."/>
            <person name="Kreis M."/>
            <person name="Delseny M."/>
            <person name="Puigdomenech P."/>
            <person name="Watson M."/>
            <person name="Schmidtheini T."/>
            <person name="Reichert B."/>
            <person name="Portetelle D."/>
            <person name="Perez-Alonso M."/>
            <person name="Boutry M."/>
            <person name="Bancroft I."/>
            <person name="Vos P."/>
            <person name="Hoheisel J."/>
            <person name="Zimmermann W."/>
            <person name="Wedler H."/>
            <person name="Ridley P."/>
            <person name="Langham S.-A."/>
            <person name="McCullagh B."/>
            <person name="Bilham L."/>
            <person name="Robben J."/>
            <person name="van der Schueren J."/>
            <person name="Grymonprez B."/>
            <person name="Chuang Y.-J."/>
            <person name="Vandenbussche F."/>
            <person name="Braeken M."/>
            <person name="Weltjens I."/>
            <person name="Voet M."/>
            <person name="Bastiaens I."/>
            <person name="Aert R."/>
            <person name="Defoor E."/>
            <person name="Weitzenegger T."/>
            <person name="Bothe G."/>
            <person name="Ramsperger U."/>
            <person name="Hilbert H."/>
            <person name="Braun M."/>
            <person name="Holzer E."/>
            <person name="Brandt A."/>
            <person name="Peters S."/>
            <person name="van Staveren M."/>
            <person name="Dirkse W."/>
            <person name="Mooijman P."/>
            <person name="Klein Lankhorst R."/>
            <person name="Rose M."/>
            <person name="Hauf J."/>
            <person name="Koetter P."/>
            <person name="Berneiser S."/>
            <person name="Hempel S."/>
            <person name="Feldpausch M."/>
            <person name="Lamberth S."/>
            <person name="Van den Daele H."/>
            <person name="De Keyser A."/>
            <person name="Buysshaert C."/>
            <person name="Gielen J."/>
            <person name="Villarroel R."/>
            <person name="De Clercq R."/>
            <person name="van Montagu M."/>
            <person name="Rogers J."/>
            <person name="Cronin A."/>
            <person name="Quail M.A."/>
            <person name="Bray-Allen S."/>
            <person name="Clark L."/>
            <person name="Doggett J."/>
            <person name="Hall S."/>
            <person name="Kay M."/>
            <person name="Lennard N."/>
            <person name="McLay K."/>
            <person name="Mayes R."/>
            <person name="Pettett A."/>
            <person name="Rajandream M.A."/>
            <person name="Lyne M."/>
            <person name="Benes V."/>
            <person name="Rechmann S."/>
            <person name="Borkova D."/>
            <person name="Bloecker H."/>
            <person name="Scharfe M."/>
            <person name="Grimm M."/>
            <person name="Loehnert T.-H."/>
            <person name="Dose S."/>
            <person name="de Haan M."/>
            <person name="Maarse A.C."/>
            <person name="Schaefer M."/>
            <person name="Mueller-Auer S."/>
            <person name="Gabel C."/>
            <person name="Fuchs M."/>
            <person name="Fartmann B."/>
            <person name="Granderath K."/>
            <person name="Dauner D."/>
            <person name="Herzl A."/>
            <person name="Neumann S."/>
            <person name="Argiriou A."/>
            <person name="Vitale D."/>
            <person name="Liguori R."/>
            <person name="Piravandi E."/>
            <person name="Massenet O."/>
            <person name="Quigley F."/>
            <person name="Clabauld G."/>
            <person name="Muendlein A."/>
            <person name="Felber R."/>
            <person name="Schnabl S."/>
            <person name="Hiller R."/>
            <person name="Schmidt W."/>
            <person name="Lecharny A."/>
            <person name="Aubourg S."/>
            <person name="Chefdor F."/>
            <person name="Cooke R."/>
            <person name="Berger C."/>
            <person name="Monfort A."/>
            <person name="Casacuberta E."/>
            <person name="Gibbons T."/>
            <person name="Weber N."/>
            <person name="Vandenbol M."/>
            <person name="Bargues M."/>
            <person name="Terol J."/>
            <person name="Torres A."/>
            <person name="Perez-Perez A."/>
            <person name="Purnelle B."/>
            <person name="Bent E."/>
            <person name="Johnson S."/>
            <person name="Tacon D."/>
            <person name="Jesse T."/>
            <person name="Heijnen L."/>
            <person name="Schwarz S."/>
            <person name="Scholler P."/>
            <person name="Heber S."/>
            <person name="Francs P."/>
            <person name="Bielke C."/>
            <person name="Frishman D."/>
            <person name="Haase D."/>
            <person name="Lemcke K."/>
            <person name="Mewes H.-W."/>
            <person name="Stocker S."/>
            <person name="Zaccaria P."/>
            <person name="Bevan M."/>
            <person name="Wilson R.K."/>
            <person name="de la Bastide M."/>
            <person name="Habermann K."/>
            <person name="Parnell L."/>
            <person name="Dedhia N."/>
            <person name="Gnoj L."/>
            <person name="Schutz K."/>
            <person name="Huang E."/>
            <person name="Spiegel L."/>
            <person name="Sekhon M."/>
            <person name="Murray J."/>
            <person name="Sheet P."/>
            <person name="Cordes M."/>
            <person name="Abu-Threideh J."/>
            <person name="Stoneking T."/>
            <person name="Kalicki J."/>
            <person name="Graves T."/>
            <person name="Harmon G."/>
            <person name="Edwards J."/>
            <person name="Latreille P."/>
            <person name="Courtney L."/>
            <person name="Cloud J."/>
            <person name="Abbott A."/>
            <person name="Scott K."/>
            <person name="Johnson D."/>
            <person name="Minx P."/>
            <person name="Bentley D."/>
            <person name="Fulton B."/>
            <person name="Miller N."/>
            <person name="Greco T."/>
            <person name="Kemp K."/>
            <person name="Kramer J."/>
            <person name="Fulton L."/>
            <person name="Mardis E."/>
            <person name="Dante M."/>
            <person name="Pepin K."/>
            <person name="Hillier L.W."/>
            <person name="Nelson J."/>
            <person name="Spieth J."/>
            <person name="Ryan E."/>
            <person name="Andrews S."/>
            <person name="Geisel C."/>
            <person name="Layman D."/>
            <person name="Du H."/>
            <person name="Ali J."/>
            <person name="Berghoff A."/>
            <person name="Jones K."/>
            <person name="Drone K."/>
            <person name="Cotton M."/>
            <person name="Joshu C."/>
            <person name="Antonoiu B."/>
            <person name="Zidanic M."/>
            <person name="Strong C."/>
            <person name="Sun H."/>
            <person name="Lamar B."/>
            <person name="Yordan C."/>
            <person name="Ma P."/>
            <person name="Zhong J."/>
            <person name="Preston R."/>
            <person name="Vil D."/>
            <person name="Shekher M."/>
            <person name="Matero A."/>
            <person name="Shah R."/>
            <person name="Swaby I.K."/>
            <person name="O'Shaughnessy A."/>
            <person name="Rodriguez M."/>
            <person name="Hoffman J."/>
            <person name="Till S."/>
            <person name="Granat S."/>
            <person name="Shohdy N."/>
            <person name="Hasegawa A."/>
            <person name="Hameed A."/>
            <person name="Lodhi M."/>
            <person name="Johnson A."/>
            <person name="Chen E."/>
            <person name="Marra M.A."/>
            <person name="Martienssen R."/>
            <person name="McCombie W.R."/>
        </authorList>
    </citation>
    <scope>NUCLEOTIDE SEQUENCE [LARGE SCALE GENOMIC DNA]</scope>
    <source>
        <strain>cv. Columbia</strain>
    </source>
</reference>
<reference key="2">
    <citation type="journal article" date="2017" name="Plant J.">
        <title>Araport11: a complete reannotation of the Arabidopsis thaliana reference genome.</title>
        <authorList>
            <person name="Cheng C.Y."/>
            <person name="Krishnakumar V."/>
            <person name="Chan A.P."/>
            <person name="Thibaud-Nissen F."/>
            <person name="Schobel S."/>
            <person name="Town C.D."/>
        </authorList>
    </citation>
    <scope>GENOME REANNOTATION</scope>
    <source>
        <strain>cv. Columbia</strain>
    </source>
</reference>
<reference key="3">
    <citation type="journal article" date="2003" name="Science">
        <title>Empirical analysis of transcriptional activity in the Arabidopsis genome.</title>
        <authorList>
            <person name="Yamada K."/>
            <person name="Lim J."/>
            <person name="Dale J.M."/>
            <person name="Chen H."/>
            <person name="Shinn P."/>
            <person name="Palm C.J."/>
            <person name="Southwick A.M."/>
            <person name="Wu H.C."/>
            <person name="Kim C.J."/>
            <person name="Nguyen M."/>
            <person name="Pham P.K."/>
            <person name="Cheuk R.F."/>
            <person name="Karlin-Newmann G."/>
            <person name="Liu S.X."/>
            <person name="Lam B."/>
            <person name="Sakano H."/>
            <person name="Wu T."/>
            <person name="Yu G."/>
            <person name="Miranda M."/>
            <person name="Quach H.L."/>
            <person name="Tripp M."/>
            <person name="Chang C.H."/>
            <person name="Lee J.M."/>
            <person name="Toriumi M.J."/>
            <person name="Chan M.M."/>
            <person name="Tang C.C."/>
            <person name="Onodera C.S."/>
            <person name="Deng J.M."/>
            <person name="Akiyama K."/>
            <person name="Ansari Y."/>
            <person name="Arakawa T."/>
            <person name="Banh J."/>
            <person name="Banno F."/>
            <person name="Bowser L."/>
            <person name="Brooks S.Y."/>
            <person name="Carninci P."/>
            <person name="Chao Q."/>
            <person name="Choy N."/>
            <person name="Enju A."/>
            <person name="Goldsmith A.D."/>
            <person name="Gurjal M."/>
            <person name="Hansen N.F."/>
            <person name="Hayashizaki Y."/>
            <person name="Johnson-Hopson C."/>
            <person name="Hsuan V.W."/>
            <person name="Iida K."/>
            <person name="Karnes M."/>
            <person name="Khan S."/>
            <person name="Koesema E."/>
            <person name="Ishida J."/>
            <person name="Jiang P.X."/>
            <person name="Jones T."/>
            <person name="Kawai J."/>
            <person name="Kamiya A."/>
            <person name="Meyers C."/>
            <person name="Nakajima M."/>
            <person name="Narusaka M."/>
            <person name="Seki M."/>
            <person name="Sakurai T."/>
            <person name="Satou M."/>
            <person name="Tamse R."/>
            <person name="Vaysberg M."/>
            <person name="Wallender E.K."/>
            <person name="Wong C."/>
            <person name="Yamamura Y."/>
            <person name="Yuan S."/>
            <person name="Shinozaki K."/>
            <person name="Davis R.W."/>
            <person name="Theologis A."/>
            <person name="Ecker J.R."/>
        </authorList>
    </citation>
    <scope>NUCLEOTIDE SEQUENCE [LARGE SCALE MRNA]</scope>
    <source>
        <strain>cv. Columbia</strain>
    </source>
</reference>
<reference key="4">
    <citation type="journal article" date="2013" name="Mol. Plant">
        <title>Adenine phosphoribosyl transferase 1 is a key enzyme catalyzing cytokinin conversion from nucleobases to nucleotides in Arabidopsis.</title>
        <authorList>
            <person name="Zhang X."/>
            <person name="Chen Y."/>
            <person name="Lin X."/>
            <person name="Hong X."/>
            <person name="Zhu Y."/>
            <person name="Li W."/>
            <person name="He W."/>
            <person name="An F."/>
            <person name="Guo H."/>
        </authorList>
    </citation>
    <scope>FUNCTION</scope>
    <scope>CATALYTIC ACTIVITY</scope>
    <scope>DISRUPTION PHENOTYPE</scope>
</reference>
<accession>Q9SU38</accession>
<sequence length="182" mass="20355">MSENEVKDPRIDGIKTKIRVVPDFPKKGIMFQDITTLLLDPKAFKDTIDLFVERYRDMNISVVAGIEARGFIFGSPIALAIGAKFVPLRKPKKLPGQIIFEEYELEYGSDRLEMHVEAVDSGDRALVVDDLIATGGTLCAAMNLLKRVGAEVIECACVIELPELKGRERLEGKPLYVLVEYR</sequence>
<feature type="chain" id="PRO_0000430131" description="Adenine phosphoribosyltransferase 4">
    <location>
        <begin position="1"/>
        <end position="182"/>
    </location>
</feature>
<gene>
    <name type="primary">APT4</name>
    <name type="ordered locus">At4g12440</name>
    <name type="ORF">T1P17.30</name>
</gene>
<evidence type="ECO:0000250" key="1"/>
<evidence type="ECO:0000269" key="2">
    <source>
    </source>
</evidence>
<evidence type="ECO:0000305" key="3"/>
<keyword id="KW-0025">Alternative splicing</keyword>
<keyword id="KW-0963">Cytoplasm</keyword>
<keyword id="KW-0328">Glycosyltransferase</keyword>
<keyword id="KW-0660">Purine salvage</keyword>
<keyword id="KW-1185">Reference proteome</keyword>
<keyword id="KW-0808">Transferase</keyword>